<organism>
    <name type="scientific">Shewanella baltica (strain OS155 / ATCC BAA-1091)</name>
    <dbReference type="NCBI Taxonomy" id="325240"/>
    <lineage>
        <taxon>Bacteria</taxon>
        <taxon>Pseudomonadati</taxon>
        <taxon>Pseudomonadota</taxon>
        <taxon>Gammaproteobacteria</taxon>
        <taxon>Alteromonadales</taxon>
        <taxon>Shewanellaceae</taxon>
        <taxon>Shewanella</taxon>
    </lineage>
</organism>
<gene>
    <name evidence="1" type="primary">trmD</name>
    <name type="ordered locus">Sbal_1212</name>
</gene>
<keyword id="KW-0963">Cytoplasm</keyword>
<keyword id="KW-0489">Methyltransferase</keyword>
<keyword id="KW-1185">Reference proteome</keyword>
<keyword id="KW-0949">S-adenosyl-L-methionine</keyword>
<keyword id="KW-0808">Transferase</keyword>
<keyword id="KW-0819">tRNA processing</keyword>
<reference key="1">
    <citation type="submission" date="2007-02" db="EMBL/GenBank/DDBJ databases">
        <title>Complete sequence of chromosome of Shewanella baltica OS155.</title>
        <authorList>
            <consortium name="US DOE Joint Genome Institute"/>
            <person name="Copeland A."/>
            <person name="Lucas S."/>
            <person name="Lapidus A."/>
            <person name="Barry K."/>
            <person name="Detter J.C."/>
            <person name="Glavina del Rio T."/>
            <person name="Hammon N."/>
            <person name="Israni S."/>
            <person name="Dalin E."/>
            <person name="Tice H."/>
            <person name="Pitluck S."/>
            <person name="Sims D.R."/>
            <person name="Brettin T."/>
            <person name="Bruce D."/>
            <person name="Han C."/>
            <person name="Tapia R."/>
            <person name="Brainard J."/>
            <person name="Schmutz J."/>
            <person name="Larimer F."/>
            <person name="Land M."/>
            <person name="Hauser L."/>
            <person name="Kyrpides N."/>
            <person name="Mikhailova N."/>
            <person name="Brettar I."/>
            <person name="Klappenbach J."/>
            <person name="Konstantinidis K."/>
            <person name="Rodrigues J."/>
            <person name="Tiedje J."/>
            <person name="Richardson P."/>
        </authorList>
    </citation>
    <scope>NUCLEOTIDE SEQUENCE [LARGE SCALE GENOMIC DNA]</scope>
    <source>
        <strain>OS155 / ATCC BAA-1091</strain>
    </source>
</reference>
<evidence type="ECO:0000255" key="1">
    <source>
        <dbReference type="HAMAP-Rule" id="MF_00605"/>
    </source>
</evidence>
<dbReference type="EC" id="2.1.1.228" evidence="1"/>
<dbReference type="EMBL" id="CP000563">
    <property type="protein sequence ID" value="ABN60730.1"/>
    <property type="molecule type" value="Genomic_DNA"/>
</dbReference>
<dbReference type="RefSeq" id="WP_006080790.1">
    <property type="nucleotide sequence ID" value="NC_009052.1"/>
</dbReference>
<dbReference type="SMR" id="A3D1W7"/>
<dbReference type="STRING" id="325240.Sbal_1212"/>
<dbReference type="KEGG" id="sbl:Sbal_1212"/>
<dbReference type="HOGENOM" id="CLU_047363_0_1_6"/>
<dbReference type="OrthoDB" id="9807416at2"/>
<dbReference type="Proteomes" id="UP000001557">
    <property type="component" value="Chromosome"/>
</dbReference>
<dbReference type="GO" id="GO:0005829">
    <property type="term" value="C:cytosol"/>
    <property type="evidence" value="ECO:0007669"/>
    <property type="project" value="TreeGrafter"/>
</dbReference>
<dbReference type="GO" id="GO:0052906">
    <property type="term" value="F:tRNA (guanine(37)-N1)-methyltransferase activity"/>
    <property type="evidence" value="ECO:0007669"/>
    <property type="project" value="UniProtKB-UniRule"/>
</dbReference>
<dbReference type="GO" id="GO:0002939">
    <property type="term" value="P:tRNA N1-guanine methylation"/>
    <property type="evidence" value="ECO:0007669"/>
    <property type="project" value="TreeGrafter"/>
</dbReference>
<dbReference type="CDD" id="cd18080">
    <property type="entry name" value="TrmD-like"/>
    <property type="match status" value="1"/>
</dbReference>
<dbReference type="FunFam" id="1.10.1270.20:FF:000001">
    <property type="entry name" value="tRNA (guanine-N(1)-)-methyltransferase"/>
    <property type="match status" value="1"/>
</dbReference>
<dbReference type="FunFam" id="3.40.1280.10:FF:000001">
    <property type="entry name" value="tRNA (guanine-N(1)-)-methyltransferase"/>
    <property type="match status" value="1"/>
</dbReference>
<dbReference type="Gene3D" id="3.40.1280.10">
    <property type="match status" value="1"/>
</dbReference>
<dbReference type="Gene3D" id="1.10.1270.20">
    <property type="entry name" value="tRNA(m1g37)methyltransferase, domain 2"/>
    <property type="match status" value="1"/>
</dbReference>
<dbReference type="HAMAP" id="MF_00605">
    <property type="entry name" value="TrmD"/>
    <property type="match status" value="1"/>
</dbReference>
<dbReference type="InterPro" id="IPR029028">
    <property type="entry name" value="Alpha/beta_knot_MTases"/>
</dbReference>
<dbReference type="InterPro" id="IPR023148">
    <property type="entry name" value="tRNA_m1G_MeTrfase_C_sf"/>
</dbReference>
<dbReference type="InterPro" id="IPR002649">
    <property type="entry name" value="tRNA_m1G_MeTrfase_TrmD"/>
</dbReference>
<dbReference type="InterPro" id="IPR029026">
    <property type="entry name" value="tRNA_m1G_MTases_N"/>
</dbReference>
<dbReference type="InterPro" id="IPR016009">
    <property type="entry name" value="tRNA_MeTrfase_TRMD/TRM10"/>
</dbReference>
<dbReference type="NCBIfam" id="NF000648">
    <property type="entry name" value="PRK00026.1"/>
    <property type="match status" value="1"/>
</dbReference>
<dbReference type="NCBIfam" id="TIGR00088">
    <property type="entry name" value="trmD"/>
    <property type="match status" value="1"/>
</dbReference>
<dbReference type="PANTHER" id="PTHR46417">
    <property type="entry name" value="TRNA (GUANINE-N(1)-)-METHYLTRANSFERASE"/>
    <property type="match status" value="1"/>
</dbReference>
<dbReference type="PANTHER" id="PTHR46417:SF1">
    <property type="entry name" value="TRNA (GUANINE-N(1)-)-METHYLTRANSFERASE"/>
    <property type="match status" value="1"/>
</dbReference>
<dbReference type="Pfam" id="PF01746">
    <property type="entry name" value="tRNA_m1G_MT"/>
    <property type="match status" value="1"/>
</dbReference>
<dbReference type="PIRSF" id="PIRSF000386">
    <property type="entry name" value="tRNA_mtase"/>
    <property type="match status" value="1"/>
</dbReference>
<dbReference type="SUPFAM" id="SSF75217">
    <property type="entry name" value="alpha/beta knot"/>
    <property type="match status" value="1"/>
</dbReference>
<feature type="chain" id="PRO_1000006513" description="tRNA (guanine-N(1)-)-methyltransferase">
    <location>
        <begin position="1"/>
        <end position="248"/>
    </location>
</feature>
<feature type="binding site" evidence="1">
    <location>
        <position position="113"/>
    </location>
    <ligand>
        <name>S-adenosyl-L-methionine</name>
        <dbReference type="ChEBI" id="CHEBI:59789"/>
    </ligand>
</feature>
<feature type="binding site" evidence="1">
    <location>
        <begin position="133"/>
        <end position="138"/>
    </location>
    <ligand>
        <name>S-adenosyl-L-methionine</name>
        <dbReference type="ChEBI" id="CHEBI:59789"/>
    </ligand>
</feature>
<name>TRMD_SHEB5</name>
<sequence length="248" mass="27426">MWLGVITLFPEMFRAVTDFGVTGRAVKNGLLELHTWNPRDFTHDRHNTVDDRPYGGGPGMLMMVQPLRDAIHAAKAAAGEGAKVIYLSPQGRKLDQQGVTELAQSSRLILVCGRYEGIDERIIQTEVDEEWSIGDYVLSGGELPAMTLIDSVSRLVPGVLGKQASAEQDSFSDGLLDCPHYTRPESLDGVDVPAVLLSGNHEQIRLWRLQQSLGRTLLRRPELLQNLALTDEQTTLLAQFVEAMNKHA</sequence>
<comment type="function">
    <text evidence="1">Specifically methylates guanosine-37 in various tRNAs.</text>
</comment>
<comment type="catalytic activity">
    <reaction evidence="1">
        <text>guanosine(37) in tRNA + S-adenosyl-L-methionine = N(1)-methylguanosine(37) in tRNA + S-adenosyl-L-homocysteine + H(+)</text>
        <dbReference type="Rhea" id="RHEA:36899"/>
        <dbReference type="Rhea" id="RHEA-COMP:10145"/>
        <dbReference type="Rhea" id="RHEA-COMP:10147"/>
        <dbReference type="ChEBI" id="CHEBI:15378"/>
        <dbReference type="ChEBI" id="CHEBI:57856"/>
        <dbReference type="ChEBI" id="CHEBI:59789"/>
        <dbReference type="ChEBI" id="CHEBI:73542"/>
        <dbReference type="ChEBI" id="CHEBI:74269"/>
        <dbReference type="EC" id="2.1.1.228"/>
    </reaction>
</comment>
<comment type="subunit">
    <text evidence="1">Homodimer.</text>
</comment>
<comment type="subcellular location">
    <subcellularLocation>
        <location evidence="1">Cytoplasm</location>
    </subcellularLocation>
</comment>
<comment type="similarity">
    <text evidence="1">Belongs to the RNA methyltransferase TrmD family.</text>
</comment>
<protein>
    <recommendedName>
        <fullName evidence="1">tRNA (guanine-N(1)-)-methyltransferase</fullName>
        <ecNumber evidence="1">2.1.1.228</ecNumber>
    </recommendedName>
    <alternativeName>
        <fullName evidence="1">M1G-methyltransferase</fullName>
    </alternativeName>
    <alternativeName>
        <fullName evidence="1">tRNA [GM37] methyltransferase</fullName>
    </alternativeName>
</protein>
<proteinExistence type="inferred from homology"/>
<accession>A3D1W7</accession>